<accession>Q9IPJ6</accession>
<accession>Q75T09</accession>
<accession>Q787B5</accession>
<gene>
    <name type="primary">G</name>
</gene>
<dbReference type="EMBL" id="AB044824">
    <property type="protein sequence ID" value="BAA96805.1"/>
    <property type="molecule type" value="Genomic_RNA"/>
</dbReference>
<dbReference type="EMBL" id="AB009663">
    <property type="protein sequence ID" value="BAA24086.2"/>
    <property type="molecule type" value="Genomic_RNA"/>
</dbReference>
<dbReference type="EMBL" id="AB128149">
    <property type="protein sequence ID" value="BAD04913.1"/>
    <property type="molecule type" value="Genomic_RNA"/>
</dbReference>
<dbReference type="SMR" id="Q9IPJ6"/>
<dbReference type="GlyCosmos" id="Q9IPJ6">
    <property type="glycosylation" value="3 sites, No reported glycans"/>
</dbReference>
<dbReference type="ABCD" id="Q9IPJ6">
    <property type="antibodies" value="2 sequenced antibodies"/>
</dbReference>
<dbReference type="Proteomes" id="UP000006366">
    <property type="component" value="Genome"/>
</dbReference>
<dbReference type="Proteomes" id="UP000007309">
    <property type="component" value="Genome"/>
</dbReference>
<dbReference type="Proteomes" id="UP000007310">
    <property type="component" value="Genome"/>
</dbReference>
<dbReference type="GO" id="GO:0016020">
    <property type="term" value="C:membrane"/>
    <property type="evidence" value="ECO:0007669"/>
    <property type="project" value="UniProtKB-KW"/>
</dbReference>
<dbReference type="GO" id="GO:0019031">
    <property type="term" value="C:viral envelope"/>
    <property type="evidence" value="ECO:0007669"/>
    <property type="project" value="UniProtKB-KW"/>
</dbReference>
<dbReference type="GO" id="GO:0036338">
    <property type="term" value="C:viral membrane"/>
    <property type="evidence" value="ECO:0000250"/>
    <property type="project" value="UniProtKB"/>
</dbReference>
<dbReference type="GO" id="GO:0055036">
    <property type="term" value="C:virion membrane"/>
    <property type="evidence" value="ECO:0007669"/>
    <property type="project" value="UniProtKB-SubCell"/>
</dbReference>
<dbReference type="GO" id="GO:0098670">
    <property type="term" value="P:entry receptor-mediated virion attachment to host cell"/>
    <property type="evidence" value="ECO:0000250"/>
    <property type="project" value="UniProtKB"/>
</dbReference>
<dbReference type="GO" id="GO:0039654">
    <property type="term" value="P:fusion of virus membrane with host endosome membrane"/>
    <property type="evidence" value="ECO:0000250"/>
    <property type="project" value="UniProtKB"/>
</dbReference>
<dbReference type="Gene3D" id="2.30.29.130">
    <property type="match status" value="1"/>
</dbReference>
<dbReference type="InterPro" id="IPR055448">
    <property type="entry name" value="PH_Rhabdo_glycop"/>
</dbReference>
<dbReference type="InterPro" id="IPR055447">
    <property type="entry name" value="Rhabdo_glycop_CD"/>
</dbReference>
<dbReference type="InterPro" id="IPR001903">
    <property type="entry name" value="Rhabdo_glycop_FD"/>
</dbReference>
<dbReference type="Pfam" id="PF24834">
    <property type="entry name" value="PH_Rhabdo_glycop"/>
    <property type="match status" value="1"/>
</dbReference>
<dbReference type="Pfam" id="PF24833">
    <property type="entry name" value="Rhabdo_glycop_CD"/>
    <property type="match status" value="1"/>
</dbReference>
<dbReference type="Pfam" id="PF00974">
    <property type="entry name" value="Rhabdo_glycop_FD"/>
    <property type="match status" value="1"/>
</dbReference>
<dbReference type="SUPFAM" id="SSF161008">
    <property type="entry name" value="Viral glycoprotein ectodomain-like"/>
    <property type="match status" value="1"/>
</dbReference>
<organism>
    <name type="scientific">Rabies virus (strain Nishigahara RCEH)</name>
    <name type="common">RABV</name>
    <dbReference type="NCBI Taxonomy" id="11298"/>
    <lineage>
        <taxon>Viruses</taxon>
        <taxon>Riboviria</taxon>
        <taxon>Orthornavirae</taxon>
        <taxon>Negarnaviricota</taxon>
        <taxon>Haploviricotina</taxon>
        <taxon>Monjiviricetes</taxon>
        <taxon>Mononegavirales</taxon>
        <taxon>Rhabdoviridae</taxon>
        <taxon>Alpharhabdovirinae</taxon>
        <taxon>Lyssavirus</taxon>
        <taxon>Lyssavirus rabies</taxon>
    </lineage>
</organism>
<sequence length="524" mass="58427">MVPQALLLVPILGFSSCFGKFPIYTIPDTLGPWSPIDIHHLSCPNNLVVEDEGCTNLSGFSYMELKVGYISAIKVNGFTCTGVVTEAETYTNFVGYVTTTFKRKHFRPTPDACRAAYNWKMAGDPRYEESLHSPYPDYHWLRTVKTTKESLVIISPSVADLDPYDNSLHSRVFPSGKCSGITVSSVYCSTNHDYTVWMPESLRLGTSCDIFTNSRGKRASKGSKTCGFVDERGLYKSLKGACKLKLCGVLGLRLMDGTWVAMQTSNETKWCPPDQLVNLHDLRSDEIEHLVIEELVKKREECLDALESIITTKSVSFRRLSYLRKLVPGFGKAYTIFNKTLMEAEAHYKSVRTWNEIIPSKGCLRVGGRCHPHVNGVFFNGIILGPDGHVLIPEMQSSLLQQHIELLESSVIPLMHPLADPFTVFKDGDETEDFIEVHLPDVHEQVSGVDLGLPNWGEYVLLSAGTLIALMLIIFLMTCCRKVDRPESTQRSLRGTGRNVSVTSQSGKFIPSWESYKSGGETGL</sequence>
<comment type="function">
    <text evidence="1 2">Attaches the virus to host cellular receptor, inducing endocytosis of the virion by using different host proteins including TFRC, GRM2 and ITGB1 (By similarity). In the endosome, the acidic pH induces conformational changes in the glycoprotein trimer, which trigger fusion between virus and cell membrane. There is convincing in vitro evidence that the muscular form of the nicotinic acetylcholine receptor (nAChR), the neuronal cell adhesion molecule (NCAM), and the p75 neurotrophin receptor (p75NTR) bind glycoprotein and thereby facilitate rabies virus entry into cells (By similarity).</text>
</comment>
<comment type="subunit">
    <text evidence="1 2">Homotrimer (By similarity). Interacts with matrix protein (By similarity). Interacts with host TRFC. Interacts with host BST2; this interaction inhibits viral budding by tethering new virions to the cell surface. Interacts with ITGB1. Interacts with host GRM2 (By similarity).</text>
</comment>
<comment type="subcellular location">
    <subcellularLocation>
        <location evidence="4">Virion membrane</location>
        <topology evidence="4">Single-pass type I membrane protein</topology>
    </subcellularLocation>
</comment>
<comment type="PTM">
    <text evidence="1">Glycosylated and palmitoylated by host. Glycosylation is crucial for glycoprotein export at the cell surface (By similarity).</text>
</comment>
<comment type="biotechnology">
    <text>Primary surface antigen capable of inducing and reacting with virus-neutralizing antibodies. Almost all human and veterinary vaccines are based on the functional aspects of the G protein.</text>
</comment>
<comment type="miscellaneous">
    <text evidence="1">Arg-352 is highly involved in rabies virus pathogenicity. Its mutation dramatically attenuates the virus (By similarity).</text>
</comment>
<comment type="similarity">
    <text evidence="4">Belongs to the lyssavirus glycoprotein family.</text>
</comment>
<feature type="signal peptide" evidence="3">
    <location>
        <begin position="1"/>
        <end position="19"/>
    </location>
</feature>
<feature type="chain" id="PRO_0000295802" description="Glycoprotein">
    <location>
        <begin position="20"/>
        <end position="524"/>
    </location>
</feature>
<feature type="topological domain" description="Virion surface" evidence="3">
    <location>
        <begin position="20"/>
        <end position="459"/>
    </location>
</feature>
<feature type="transmembrane region" description="Helical" evidence="3">
    <location>
        <begin position="460"/>
        <end position="480"/>
    </location>
</feature>
<feature type="topological domain" description="Intravirion" evidence="3">
    <location>
        <begin position="481"/>
        <end position="524"/>
    </location>
</feature>
<feature type="lipid moiety-binding region" description="S-palmitoyl cysteine; by host" evidence="1">
    <location>
        <position position="480"/>
    </location>
</feature>
<feature type="glycosylation site" description="N-linked (GlcNAc...) asparagine; by host" evidence="1">
    <location>
        <position position="56"/>
    </location>
</feature>
<feature type="glycosylation site" description="N-linked (GlcNAc...) asparagine; by host" evidence="1">
    <location>
        <position position="266"/>
    </location>
</feature>
<feature type="glycosylation site" description="N-linked (GlcNAc...) asparagine; by host" evidence="1">
    <location>
        <position position="338"/>
    </location>
</feature>
<feature type="disulfide bond" evidence="2">
    <location>
        <begin position="43"/>
        <end position="302"/>
    </location>
</feature>
<feature type="disulfide bond" evidence="2">
    <location>
        <begin position="54"/>
        <end position="226"/>
    </location>
</feature>
<feature type="disulfide bond" evidence="2">
    <location>
        <begin position="80"/>
        <end position="113"/>
    </location>
</feature>
<feature type="disulfide bond" evidence="2">
    <location>
        <begin position="178"/>
        <end position="188"/>
    </location>
</feature>
<feature type="disulfide bond" evidence="2">
    <location>
        <begin position="208"/>
        <end position="247"/>
    </location>
</feature>
<feature type="disulfide bond" evidence="2">
    <location>
        <begin position="242"/>
        <end position="271"/>
    </location>
</feature>
<feature type="disulfide bond" evidence="2">
    <location>
        <begin position="363"/>
        <end position="370"/>
    </location>
</feature>
<feature type="sequence variant" description="In strain: RC_HL.">
    <original>S</original>
    <variation>L</variation>
    <location>
        <position position="16"/>
    </location>
</feature>
<feature type="sequence variant" description="In strain: Ni-CE.">
    <original>Y</original>
    <variation>R</variation>
    <location>
        <position position="69"/>
    </location>
</feature>
<feature type="sequence variant" description="In strain: RC_HL.">
    <original>I</original>
    <variation>T</variation>
    <location>
        <position position="70"/>
    </location>
</feature>
<feature type="sequence variant" description="In strain: RC_HL.">
    <original>V</original>
    <variation>R</variation>
    <location>
        <position position="183"/>
    </location>
</feature>
<feature type="sequence variant" description="In strain: Ni-CE and RC_HL.">
    <original>S</original>
    <variation>I</variation>
    <location>
        <position position="201"/>
    </location>
</feature>
<feature type="sequence variant" description="In strain: RC_HL.">
    <original>A</original>
    <variation>V</variation>
    <location>
        <position position="219"/>
    </location>
</feature>
<feature type="sequence variant" description="In strain: RC_HL.">
    <original>K</original>
    <variation>T</variation>
    <location>
        <position position="224"/>
    </location>
</feature>
<feature type="sequence variant" description="In strain: RC_HL.">
    <original>V</original>
    <variation>I</variation>
    <location>
        <position position="229"/>
    </location>
</feature>
<feature type="sequence variant" description="In strain: RC_HL.">
    <original>A</original>
    <variation>S</variation>
    <location>
        <position position="261"/>
    </location>
</feature>
<feature type="sequence variant" description="In strain: RC_HL.">
    <original>D</original>
    <variation>N</variation>
    <location>
        <position position="274"/>
    </location>
</feature>
<feature type="sequence variant" description="In strain: RC_HL.">
    <original>I</original>
    <variation>L</variation>
    <location>
        <position position="287"/>
    </location>
</feature>
<feature type="sequence variant" description="In strain: RC_HL.">
    <original>Y</original>
    <variation>H</variation>
    <location>
        <position position="322"/>
    </location>
</feature>
<feature type="sequence variant" description="In strain: RC_HL.">
    <original>E</original>
    <variation>K</variation>
    <location>
        <position position="458"/>
    </location>
</feature>
<feature type="sequence variant" description="In strain: RC_HL.">
    <original>M</original>
    <variation>V</variation>
    <location>
        <position position="471"/>
    </location>
</feature>
<feature type="sequence variant" description="In strain: RC_HL.">
    <original>P</original>
    <variation>N</variation>
    <location>
        <position position="511"/>
    </location>
</feature>
<proteinExistence type="evidence at protein level"/>
<name>GLYCO_RABVN</name>
<reference key="1">
    <citation type="journal article" date="2001" name="Microbiol. Immunol.">
        <title>A comparison of complete genome sequences of the attenuated RC-HL strain of rabies virus used for production of animal vaccine in Japan, and the parental Nishigahara strain.</title>
        <authorList>
            <person name="Ito N."/>
            <person name="Kakemizu M."/>
            <person name="Ito K.A."/>
            <person name="Yamamoto A."/>
            <person name="Yoshida Y."/>
            <person name="Sugiyama M."/>
            <person name="Minamoto N."/>
        </authorList>
    </citation>
    <scope>NUCLEOTIDE SEQUENCE [GENOMIC RNA]</scope>
    <source>
        <strain>Nishigahara</strain>
        <strain>RC_HL</strain>
    </source>
</reference>
<reference key="2">
    <citation type="journal article" date="2007" name="Virus Res.">
        <title>Involvement of nucleoprotein, phosphoprotein, and matrix protein genes of rabies virus in virulence for adult mice.</title>
        <authorList>
            <person name="Shimizu K."/>
            <person name="Ito N."/>
            <person name="Mita T."/>
            <person name="Yamada K."/>
            <person name="Hosokawa-Muto J."/>
            <person name="Sugiyama M."/>
            <person name="Minamoto N."/>
        </authorList>
    </citation>
    <scope>NUCLEOTIDE SEQUENCE [GENOMIC RNA]</scope>
    <source>
        <strain>Ni-CE</strain>
    </source>
</reference>
<organismHost>
    <name type="scientific">Homo sapiens</name>
    <name type="common">Human</name>
    <dbReference type="NCBI Taxonomy" id="9606"/>
</organismHost>
<organismHost>
    <name type="scientific">Mammalia</name>
    <dbReference type="NCBI Taxonomy" id="40674"/>
</organismHost>
<protein>
    <recommendedName>
        <fullName>Glycoprotein</fullName>
    </recommendedName>
</protein>
<keyword id="KW-1015">Disulfide bond</keyword>
<keyword id="KW-0325">Glycoprotein</keyword>
<keyword id="KW-0449">Lipoprotein</keyword>
<keyword id="KW-0472">Membrane</keyword>
<keyword id="KW-0564">Palmitate</keyword>
<keyword id="KW-0732">Signal</keyword>
<keyword id="KW-0812">Transmembrane</keyword>
<keyword id="KW-1133">Transmembrane helix</keyword>
<keyword id="KW-0261">Viral envelope protein</keyword>
<keyword id="KW-0946">Virion</keyword>
<evidence type="ECO:0000250" key="1"/>
<evidence type="ECO:0000250" key="2">
    <source>
        <dbReference type="UniProtKB" id="P08667"/>
    </source>
</evidence>
<evidence type="ECO:0000255" key="3"/>
<evidence type="ECO:0000305" key="4"/>